<sequence>MKKKIAIAMGGYSSEYRISINSGNIVYKHLDHDLYEPYRVHILKGEWFVVADDDTPYPINKSNFTVKINDKVIQFDCVFNTIHGTPGENGLLQAYLELIGIPQTSCDYYQSALTFNKRDLISVLRPYGIKAATNYFLNKDQEINTKEIVDKVGLPCFVKANRAGSSFGVTKVKTEDEIISAAKTAFTEDDEAIIESFLDGTEVSVGVITYKGKVLALPVTEIIPDGEFFDYEAKYLGKSQEITPARISEEDTKKVQDIAIMIYKKLKMKGLSRSEFIFHEGEPHFIEMNTNPGISQASILPQQAEKAGISLKDLFGSTIEAALNQK</sequence>
<keyword id="KW-0067">ATP-binding</keyword>
<keyword id="KW-0133">Cell shape</keyword>
<keyword id="KW-0961">Cell wall biogenesis/degradation</keyword>
<keyword id="KW-0963">Cytoplasm</keyword>
<keyword id="KW-0436">Ligase</keyword>
<keyword id="KW-0460">Magnesium</keyword>
<keyword id="KW-0464">Manganese</keyword>
<keyword id="KW-0479">Metal-binding</keyword>
<keyword id="KW-0547">Nucleotide-binding</keyword>
<keyword id="KW-0573">Peptidoglycan synthesis</keyword>
<comment type="function">
    <text evidence="2">Cell wall formation.</text>
</comment>
<comment type="catalytic activity">
    <reaction evidence="2">
        <text>2 D-alanine + ATP = D-alanyl-D-alanine + ADP + phosphate + H(+)</text>
        <dbReference type="Rhea" id="RHEA:11224"/>
        <dbReference type="ChEBI" id="CHEBI:15378"/>
        <dbReference type="ChEBI" id="CHEBI:30616"/>
        <dbReference type="ChEBI" id="CHEBI:43474"/>
        <dbReference type="ChEBI" id="CHEBI:57416"/>
        <dbReference type="ChEBI" id="CHEBI:57822"/>
        <dbReference type="ChEBI" id="CHEBI:456216"/>
        <dbReference type="EC" id="6.3.2.4"/>
    </reaction>
</comment>
<comment type="cofactor">
    <cofactor evidence="1">
        <name>Mg(2+)</name>
        <dbReference type="ChEBI" id="CHEBI:18420"/>
    </cofactor>
    <cofactor evidence="1">
        <name>Mn(2+)</name>
        <dbReference type="ChEBI" id="CHEBI:29035"/>
    </cofactor>
    <text evidence="1">Binds 2 magnesium or manganese ions per subunit.</text>
</comment>
<comment type="pathway">
    <text evidence="2">Cell wall biogenesis; peptidoglycan biosynthesis.</text>
</comment>
<comment type="subcellular location">
    <subcellularLocation>
        <location evidence="2">Cytoplasm</location>
    </subcellularLocation>
</comment>
<comment type="similarity">
    <text evidence="2">Belongs to the D-alanine--D-alanine ligase family.</text>
</comment>
<gene>
    <name evidence="2" type="primary">ddl</name>
    <name type="ordered locus">GFO_2684</name>
</gene>
<reference key="1">
    <citation type="journal article" date="2006" name="Environ. Microbiol.">
        <title>Whole genome analysis of the marine Bacteroidetes'Gramella forsetii' reveals adaptations to degradation of polymeric organic matter.</title>
        <authorList>
            <person name="Bauer M."/>
            <person name="Kube M."/>
            <person name="Teeling H."/>
            <person name="Richter M."/>
            <person name="Lombardot T."/>
            <person name="Allers E."/>
            <person name="Wuerdemann C.A."/>
            <person name="Quast C."/>
            <person name="Kuhl H."/>
            <person name="Knaust F."/>
            <person name="Woebken D."/>
            <person name="Bischof K."/>
            <person name="Mussmann M."/>
            <person name="Choudhuri J.V."/>
            <person name="Meyer F."/>
            <person name="Reinhardt R."/>
            <person name="Amann R.I."/>
            <person name="Gloeckner F.O."/>
        </authorList>
    </citation>
    <scope>NUCLEOTIDE SEQUENCE [LARGE SCALE GENOMIC DNA]</scope>
    <source>
        <strain>DSM 17595 / CGMCC 1.15422 / KT0803</strain>
    </source>
</reference>
<organism>
    <name type="scientific">Christiangramia forsetii (strain DSM 17595 / CGMCC 1.15422 / KT0803)</name>
    <name type="common">Gramella forsetii</name>
    <dbReference type="NCBI Taxonomy" id="411154"/>
    <lineage>
        <taxon>Bacteria</taxon>
        <taxon>Pseudomonadati</taxon>
        <taxon>Bacteroidota</taxon>
        <taxon>Flavobacteriia</taxon>
        <taxon>Flavobacteriales</taxon>
        <taxon>Flavobacteriaceae</taxon>
        <taxon>Christiangramia</taxon>
    </lineage>
</organism>
<name>DDL_CHRFK</name>
<feature type="chain" id="PRO_0000341104" description="D-alanine--D-alanine ligase">
    <location>
        <begin position="1"/>
        <end position="326"/>
    </location>
</feature>
<feature type="domain" description="ATP-grasp" evidence="2">
    <location>
        <begin position="121"/>
        <end position="320"/>
    </location>
</feature>
<feature type="binding site" evidence="2">
    <location>
        <begin position="149"/>
        <end position="204"/>
    </location>
    <ligand>
        <name>ATP</name>
        <dbReference type="ChEBI" id="CHEBI:30616"/>
    </ligand>
</feature>
<feature type="binding site" evidence="2">
    <location>
        <position position="275"/>
    </location>
    <ligand>
        <name>Mg(2+)</name>
        <dbReference type="ChEBI" id="CHEBI:18420"/>
        <label>1</label>
    </ligand>
</feature>
<feature type="binding site" evidence="2">
    <location>
        <position position="287"/>
    </location>
    <ligand>
        <name>Mg(2+)</name>
        <dbReference type="ChEBI" id="CHEBI:18420"/>
        <label>1</label>
    </ligand>
</feature>
<feature type="binding site" evidence="2">
    <location>
        <position position="287"/>
    </location>
    <ligand>
        <name>Mg(2+)</name>
        <dbReference type="ChEBI" id="CHEBI:18420"/>
        <label>2</label>
    </ligand>
</feature>
<feature type="binding site" evidence="2">
    <location>
        <position position="289"/>
    </location>
    <ligand>
        <name>Mg(2+)</name>
        <dbReference type="ChEBI" id="CHEBI:18420"/>
        <label>2</label>
    </ligand>
</feature>
<evidence type="ECO:0000250" key="1"/>
<evidence type="ECO:0000255" key="2">
    <source>
        <dbReference type="HAMAP-Rule" id="MF_00047"/>
    </source>
</evidence>
<accession>A0M4U5</accession>
<dbReference type="EC" id="6.3.2.4" evidence="2"/>
<dbReference type="EMBL" id="CU207366">
    <property type="protein sequence ID" value="CAL67640.1"/>
    <property type="molecule type" value="Genomic_DNA"/>
</dbReference>
<dbReference type="RefSeq" id="WP_011710543.1">
    <property type="nucleotide sequence ID" value="NC_008571.1"/>
</dbReference>
<dbReference type="SMR" id="A0M4U5"/>
<dbReference type="STRING" id="411154.GFO_2684"/>
<dbReference type="KEGG" id="gfo:GFO_2684"/>
<dbReference type="eggNOG" id="COG1181">
    <property type="taxonomic scope" value="Bacteria"/>
</dbReference>
<dbReference type="HOGENOM" id="CLU_039268_1_1_10"/>
<dbReference type="OrthoDB" id="9813261at2"/>
<dbReference type="UniPathway" id="UPA00219"/>
<dbReference type="Proteomes" id="UP000000755">
    <property type="component" value="Chromosome"/>
</dbReference>
<dbReference type="GO" id="GO:0005737">
    <property type="term" value="C:cytoplasm"/>
    <property type="evidence" value="ECO:0007669"/>
    <property type="project" value="UniProtKB-SubCell"/>
</dbReference>
<dbReference type="GO" id="GO:0005524">
    <property type="term" value="F:ATP binding"/>
    <property type="evidence" value="ECO:0007669"/>
    <property type="project" value="UniProtKB-KW"/>
</dbReference>
<dbReference type="GO" id="GO:0008716">
    <property type="term" value="F:D-alanine-D-alanine ligase activity"/>
    <property type="evidence" value="ECO:0007669"/>
    <property type="project" value="UniProtKB-UniRule"/>
</dbReference>
<dbReference type="GO" id="GO:0046872">
    <property type="term" value="F:metal ion binding"/>
    <property type="evidence" value="ECO:0007669"/>
    <property type="project" value="UniProtKB-KW"/>
</dbReference>
<dbReference type="GO" id="GO:0071555">
    <property type="term" value="P:cell wall organization"/>
    <property type="evidence" value="ECO:0007669"/>
    <property type="project" value="UniProtKB-KW"/>
</dbReference>
<dbReference type="GO" id="GO:0009252">
    <property type="term" value="P:peptidoglycan biosynthetic process"/>
    <property type="evidence" value="ECO:0007669"/>
    <property type="project" value="UniProtKB-UniRule"/>
</dbReference>
<dbReference type="GO" id="GO:0008360">
    <property type="term" value="P:regulation of cell shape"/>
    <property type="evidence" value="ECO:0007669"/>
    <property type="project" value="UniProtKB-KW"/>
</dbReference>
<dbReference type="Gene3D" id="3.40.50.20">
    <property type="match status" value="1"/>
</dbReference>
<dbReference type="Gene3D" id="3.30.1490.20">
    <property type="entry name" value="ATP-grasp fold, A domain"/>
    <property type="match status" value="1"/>
</dbReference>
<dbReference type="Gene3D" id="3.30.470.20">
    <property type="entry name" value="ATP-grasp fold, B domain"/>
    <property type="match status" value="1"/>
</dbReference>
<dbReference type="HAMAP" id="MF_00047">
    <property type="entry name" value="Dala_Dala_lig"/>
    <property type="match status" value="1"/>
</dbReference>
<dbReference type="InterPro" id="IPR011761">
    <property type="entry name" value="ATP-grasp"/>
</dbReference>
<dbReference type="InterPro" id="IPR013815">
    <property type="entry name" value="ATP_grasp_subdomain_1"/>
</dbReference>
<dbReference type="InterPro" id="IPR000291">
    <property type="entry name" value="D-Ala_lig_Van_CS"/>
</dbReference>
<dbReference type="InterPro" id="IPR005905">
    <property type="entry name" value="D_ala_D_ala"/>
</dbReference>
<dbReference type="InterPro" id="IPR011095">
    <property type="entry name" value="Dala_Dala_lig_C"/>
</dbReference>
<dbReference type="InterPro" id="IPR011127">
    <property type="entry name" value="Dala_Dala_lig_N"/>
</dbReference>
<dbReference type="InterPro" id="IPR016185">
    <property type="entry name" value="PreATP-grasp_dom_sf"/>
</dbReference>
<dbReference type="NCBIfam" id="TIGR01205">
    <property type="entry name" value="D_ala_D_alaTIGR"/>
    <property type="match status" value="1"/>
</dbReference>
<dbReference type="NCBIfam" id="NF002378">
    <property type="entry name" value="PRK01372.1"/>
    <property type="match status" value="1"/>
</dbReference>
<dbReference type="NCBIfam" id="NF002527">
    <property type="entry name" value="PRK01966.1-3"/>
    <property type="match status" value="1"/>
</dbReference>
<dbReference type="PANTHER" id="PTHR23132">
    <property type="entry name" value="D-ALANINE--D-ALANINE LIGASE"/>
    <property type="match status" value="1"/>
</dbReference>
<dbReference type="PANTHER" id="PTHR23132:SF23">
    <property type="entry name" value="D-ALANINE--D-ALANINE LIGASE B"/>
    <property type="match status" value="1"/>
</dbReference>
<dbReference type="Pfam" id="PF07478">
    <property type="entry name" value="Dala_Dala_lig_C"/>
    <property type="match status" value="1"/>
</dbReference>
<dbReference type="Pfam" id="PF01820">
    <property type="entry name" value="Dala_Dala_lig_N"/>
    <property type="match status" value="1"/>
</dbReference>
<dbReference type="PIRSF" id="PIRSF039102">
    <property type="entry name" value="Ddl/VanB"/>
    <property type="match status" value="1"/>
</dbReference>
<dbReference type="SUPFAM" id="SSF56059">
    <property type="entry name" value="Glutathione synthetase ATP-binding domain-like"/>
    <property type="match status" value="1"/>
</dbReference>
<dbReference type="SUPFAM" id="SSF52440">
    <property type="entry name" value="PreATP-grasp domain"/>
    <property type="match status" value="1"/>
</dbReference>
<dbReference type="PROSITE" id="PS50975">
    <property type="entry name" value="ATP_GRASP"/>
    <property type="match status" value="1"/>
</dbReference>
<dbReference type="PROSITE" id="PS00843">
    <property type="entry name" value="DALA_DALA_LIGASE_1"/>
    <property type="match status" value="1"/>
</dbReference>
<dbReference type="PROSITE" id="PS00844">
    <property type="entry name" value="DALA_DALA_LIGASE_2"/>
    <property type="match status" value="1"/>
</dbReference>
<protein>
    <recommendedName>
        <fullName evidence="2">D-alanine--D-alanine ligase</fullName>
        <ecNumber evidence="2">6.3.2.4</ecNumber>
    </recommendedName>
    <alternativeName>
        <fullName evidence="2">D-Ala-D-Ala ligase</fullName>
    </alternativeName>
    <alternativeName>
        <fullName evidence="2">D-alanylalanine synthetase</fullName>
    </alternativeName>
</protein>
<proteinExistence type="inferred from homology"/>